<organism>
    <name type="scientific">Dechloromonas aromatica (strain RCB)</name>
    <dbReference type="NCBI Taxonomy" id="159087"/>
    <lineage>
        <taxon>Bacteria</taxon>
        <taxon>Pseudomonadati</taxon>
        <taxon>Pseudomonadota</taxon>
        <taxon>Betaproteobacteria</taxon>
        <taxon>Rhodocyclales</taxon>
        <taxon>Azonexaceae</taxon>
        <taxon>Dechloromonas</taxon>
    </lineage>
</organism>
<gene>
    <name type="ordered locus">Daro_3807</name>
</gene>
<protein>
    <recommendedName>
        <fullName evidence="1">Acetaldehyde dehydrogenase 5</fullName>
        <ecNumber evidence="1">1.2.1.10</ecNumber>
    </recommendedName>
    <alternativeName>
        <fullName evidence="1">Acetaldehyde dehydrogenase [acetylating] 5</fullName>
    </alternativeName>
</protein>
<comment type="catalytic activity">
    <reaction evidence="1">
        <text>acetaldehyde + NAD(+) + CoA = acetyl-CoA + NADH + H(+)</text>
        <dbReference type="Rhea" id="RHEA:23288"/>
        <dbReference type="ChEBI" id="CHEBI:15343"/>
        <dbReference type="ChEBI" id="CHEBI:15378"/>
        <dbReference type="ChEBI" id="CHEBI:57287"/>
        <dbReference type="ChEBI" id="CHEBI:57288"/>
        <dbReference type="ChEBI" id="CHEBI:57540"/>
        <dbReference type="ChEBI" id="CHEBI:57945"/>
        <dbReference type="EC" id="1.2.1.10"/>
    </reaction>
</comment>
<comment type="similarity">
    <text evidence="1">Belongs to the acetaldehyde dehydrogenase family.</text>
</comment>
<evidence type="ECO:0000255" key="1">
    <source>
        <dbReference type="HAMAP-Rule" id="MF_01657"/>
    </source>
</evidence>
<name>ACDH5_DECAR</name>
<reference key="1">
    <citation type="journal article" date="2009" name="BMC Genomics">
        <title>Metabolic analysis of the soil microbe Dechloromonas aromatica str. RCB: indications of a surprisingly complex life-style and cryptic anaerobic pathways for aromatic degradation.</title>
        <authorList>
            <person name="Salinero K.K."/>
            <person name="Keller K."/>
            <person name="Feil W.S."/>
            <person name="Feil H."/>
            <person name="Trong S."/>
            <person name="Di Bartolo G."/>
            <person name="Lapidus A."/>
        </authorList>
    </citation>
    <scope>NUCLEOTIDE SEQUENCE [LARGE SCALE GENOMIC DNA]</scope>
    <source>
        <strain>RCB</strain>
    </source>
</reference>
<dbReference type="EC" id="1.2.1.10" evidence="1"/>
<dbReference type="EMBL" id="CP000089">
    <property type="protein sequence ID" value="AAZ48535.1"/>
    <property type="molecule type" value="Genomic_DNA"/>
</dbReference>
<dbReference type="SMR" id="Q479E6"/>
<dbReference type="STRING" id="159087.Daro_3807"/>
<dbReference type="KEGG" id="dar:Daro_3807"/>
<dbReference type="eggNOG" id="COG4569">
    <property type="taxonomic scope" value="Bacteria"/>
</dbReference>
<dbReference type="HOGENOM" id="CLU_062208_0_0_4"/>
<dbReference type="OrthoDB" id="9786743at2"/>
<dbReference type="GO" id="GO:0008774">
    <property type="term" value="F:acetaldehyde dehydrogenase (acetylating) activity"/>
    <property type="evidence" value="ECO:0007669"/>
    <property type="project" value="UniProtKB-UniRule"/>
</dbReference>
<dbReference type="GO" id="GO:0051287">
    <property type="term" value="F:NAD binding"/>
    <property type="evidence" value="ECO:0007669"/>
    <property type="project" value="UniProtKB-UniRule"/>
</dbReference>
<dbReference type="GO" id="GO:0009056">
    <property type="term" value="P:catabolic process"/>
    <property type="evidence" value="ECO:0007669"/>
    <property type="project" value="UniProtKB-KW"/>
</dbReference>
<dbReference type="CDD" id="cd23933">
    <property type="entry name" value="ALDH_C"/>
    <property type="match status" value="1"/>
</dbReference>
<dbReference type="Gene3D" id="3.30.360.10">
    <property type="entry name" value="Dihydrodipicolinate Reductase, domain 2"/>
    <property type="match status" value="1"/>
</dbReference>
<dbReference type="Gene3D" id="3.40.50.720">
    <property type="entry name" value="NAD(P)-binding Rossmann-like Domain"/>
    <property type="match status" value="1"/>
</dbReference>
<dbReference type="HAMAP" id="MF_01657">
    <property type="entry name" value="Ac_ald_DH_ac"/>
    <property type="match status" value="1"/>
</dbReference>
<dbReference type="InterPro" id="IPR003361">
    <property type="entry name" value="Acetaldehyde_dehydrogenase"/>
</dbReference>
<dbReference type="InterPro" id="IPR015426">
    <property type="entry name" value="Acetylaldehyde_DH_C"/>
</dbReference>
<dbReference type="InterPro" id="IPR036291">
    <property type="entry name" value="NAD(P)-bd_dom_sf"/>
</dbReference>
<dbReference type="InterPro" id="IPR000534">
    <property type="entry name" value="Semialdehyde_DH_NAD-bd"/>
</dbReference>
<dbReference type="NCBIfam" id="TIGR03215">
    <property type="entry name" value="ac_ald_DH_ac"/>
    <property type="match status" value="1"/>
</dbReference>
<dbReference type="NCBIfam" id="NF006157">
    <property type="entry name" value="PRK08300.1"/>
    <property type="match status" value="1"/>
</dbReference>
<dbReference type="Pfam" id="PF09290">
    <property type="entry name" value="AcetDehyd-dimer"/>
    <property type="match status" value="1"/>
</dbReference>
<dbReference type="Pfam" id="PF01118">
    <property type="entry name" value="Semialdhyde_dh"/>
    <property type="match status" value="1"/>
</dbReference>
<dbReference type="PIRSF" id="PIRSF015689">
    <property type="entry name" value="Actaldh_dh_actl"/>
    <property type="match status" value="1"/>
</dbReference>
<dbReference type="SMART" id="SM00859">
    <property type="entry name" value="Semialdhyde_dh"/>
    <property type="match status" value="1"/>
</dbReference>
<dbReference type="SUPFAM" id="SSF55347">
    <property type="entry name" value="Glyceraldehyde-3-phosphate dehydrogenase-like, C-terminal domain"/>
    <property type="match status" value="1"/>
</dbReference>
<dbReference type="SUPFAM" id="SSF51735">
    <property type="entry name" value="NAD(P)-binding Rossmann-fold domains"/>
    <property type="match status" value="1"/>
</dbReference>
<sequence length="305" mass="32851">MKKIRCALIGSGNIGTDLIYKIQRSPVLEPVWMVGIDPESEGLARAREMGLKTTAAGVDGLLPHVLEDNIQIAFDATSAYVHAENSRKLNELGVMMIDLTPAAIGPLCVPPVNLKEHTEKLEMNVNMISCAGQATIPIVHAISRIQSVSYGEIVASLASKSIGPGTRANLDEFTYTTSNAIEIVGGARKGKALAIINPADPPMMMRNTISCLTDEEPDEPRIIESVLAMIKEVQKYVPGYRLVNGPLFDGKRVTVFMEVAGLGDYLPKYAGNLDIMTAAATRTAEMFAEEILAGTIQLKPVEMAV</sequence>
<proteinExistence type="inferred from homology"/>
<keyword id="KW-0058">Aromatic hydrocarbons catabolism</keyword>
<keyword id="KW-0520">NAD</keyword>
<keyword id="KW-0560">Oxidoreductase</keyword>
<accession>Q479E6</accession>
<feature type="chain" id="PRO_0000387657" description="Acetaldehyde dehydrogenase 5">
    <location>
        <begin position="1"/>
        <end position="305"/>
    </location>
</feature>
<feature type="active site" description="Acyl-thioester intermediate" evidence="1">
    <location>
        <position position="130"/>
    </location>
</feature>
<feature type="binding site" evidence="1">
    <location>
        <begin position="11"/>
        <end position="14"/>
    </location>
    <ligand>
        <name>NAD(+)</name>
        <dbReference type="ChEBI" id="CHEBI:57540"/>
    </ligand>
</feature>
<feature type="binding site" evidence="1">
    <location>
        <begin position="161"/>
        <end position="169"/>
    </location>
    <ligand>
        <name>NAD(+)</name>
        <dbReference type="ChEBI" id="CHEBI:57540"/>
    </ligand>
</feature>
<feature type="binding site" evidence="1">
    <location>
        <position position="272"/>
    </location>
    <ligand>
        <name>NAD(+)</name>
        <dbReference type="ChEBI" id="CHEBI:57540"/>
    </ligand>
</feature>